<feature type="chain" id="PRO_1000021488" description="Ribonuclease P protein component">
    <location>
        <begin position="1"/>
        <end position="117"/>
    </location>
</feature>
<organism>
    <name type="scientific">Thermotoga petrophila (strain ATCC BAA-488 / DSM 13995 / JCM 10881 / RKU-1)</name>
    <dbReference type="NCBI Taxonomy" id="390874"/>
    <lineage>
        <taxon>Bacteria</taxon>
        <taxon>Thermotogati</taxon>
        <taxon>Thermotogota</taxon>
        <taxon>Thermotogae</taxon>
        <taxon>Thermotogales</taxon>
        <taxon>Thermotogaceae</taxon>
        <taxon>Thermotoga</taxon>
    </lineage>
</organism>
<protein>
    <recommendedName>
        <fullName evidence="1">Ribonuclease P protein component</fullName>
        <shortName evidence="1">RNase P protein</shortName>
        <shortName evidence="1">RNaseP protein</shortName>
        <ecNumber evidence="1">3.1.26.5</ecNumber>
    </recommendedName>
    <alternativeName>
        <fullName evidence="1">Protein C5</fullName>
    </alternativeName>
</protein>
<reference key="1">
    <citation type="submission" date="2007-05" db="EMBL/GenBank/DDBJ databases">
        <title>Complete sequence of Thermotoga petrophila RKU-1.</title>
        <authorList>
            <consortium name="US DOE Joint Genome Institute"/>
            <person name="Copeland A."/>
            <person name="Lucas S."/>
            <person name="Lapidus A."/>
            <person name="Barry K."/>
            <person name="Glavina del Rio T."/>
            <person name="Dalin E."/>
            <person name="Tice H."/>
            <person name="Pitluck S."/>
            <person name="Sims D."/>
            <person name="Brettin T."/>
            <person name="Bruce D."/>
            <person name="Detter J.C."/>
            <person name="Han C."/>
            <person name="Tapia R."/>
            <person name="Schmutz J."/>
            <person name="Larimer F."/>
            <person name="Land M."/>
            <person name="Hauser L."/>
            <person name="Kyrpides N."/>
            <person name="Mikhailova N."/>
            <person name="Nelson K."/>
            <person name="Gogarten J.P."/>
            <person name="Noll K."/>
            <person name="Richardson P."/>
        </authorList>
    </citation>
    <scope>NUCLEOTIDE SEQUENCE [LARGE SCALE GENOMIC DNA]</scope>
    <source>
        <strain>ATCC BAA-488 / DSM 13995 / JCM 10881 / RKU-1</strain>
    </source>
</reference>
<name>RNPA_THEP1</name>
<gene>
    <name evidence="1" type="primary">rnpA</name>
    <name type="ordered locus">Tpet_1331</name>
</gene>
<sequence>MTESFTRRERLRLRRDFLTIFKEGESLQNEYFVVLFKKNGLDYSRLGIVVKRKFGKATRRNKLKRWVREIFRKSKGVIPKGFDIVVIPRKKLSEEFEQVDFWAVHEKLLNLLKRIEG</sequence>
<evidence type="ECO:0000255" key="1">
    <source>
        <dbReference type="HAMAP-Rule" id="MF_00227"/>
    </source>
</evidence>
<accession>A5IMC2</accession>
<dbReference type="EC" id="3.1.26.5" evidence="1"/>
<dbReference type="EMBL" id="CP000702">
    <property type="protein sequence ID" value="ABQ47345.1"/>
    <property type="molecule type" value="Genomic_DNA"/>
</dbReference>
<dbReference type="RefSeq" id="WP_011943812.1">
    <property type="nucleotide sequence ID" value="NC_009486.1"/>
</dbReference>
<dbReference type="SMR" id="A5IMC2"/>
<dbReference type="STRING" id="390874.Tpet_1331"/>
<dbReference type="KEGG" id="tpt:Tpet_1331"/>
<dbReference type="eggNOG" id="COG0594">
    <property type="taxonomic scope" value="Bacteria"/>
</dbReference>
<dbReference type="HOGENOM" id="CLU_117179_9_2_0"/>
<dbReference type="Proteomes" id="UP000006558">
    <property type="component" value="Chromosome"/>
</dbReference>
<dbReference type="GO" id="GO:0030677">
    <property type="term" value="C:ribonuclease P complex"/>
    <property type="evidence" value="ECO:0007669"/>
    <property type="project" value="TreeGrafter"/>
</dbReference>
<dbReference type="GO" id="GO:0042781">
    <property type="term" value="F:3'-tRNA processing endoribonuclease activity"/>
    <property type="evidence" value="ECO:0007669"/>
    <property type="project" value="TreeGrafter"/>
</dbReference>
<dbReference type="GO" id="GO:0004526">
    <property type="term" value="F:ribonuclease P activity"/>
    <property type="evidence" value="ECO:0007669"/>
    <property type="project" value="UniProtKB-UniRule"/>
</dbReference>
<dbReference type="GO" id="GO:0000049">
    <property type="term" value="F:tRNA binding"/>
    <property type="evidence" value="ECO:0007669"/>
    <property type="project" value="UniProtKB-UniRule"/>
</dbReference>
<dbReference type="GO" id="GO:0001682">
    <property type="term" value="P:tRNA 5'-leader removal"/>
    <property type="evidence" value="ECO:0007669"/>
    <property type="project" value="UniProtKB-UniRule"/>
</dbReference>
<dbReference type="Gene3D" id="3.30.230.10">
    <property type="match status" value="1"/>
</dbReference>
<dbReference type="HAMAP" id="MF_00227">
    <property type="entry name" value="RNase_P"/>
    <property type="match status" value="1"/>
</dbReference>
<dbReference type="InterPro" id="IPR020568">
    <property type="entry name" value="Ribosomal_Su5_D2-typ_SF"/>
</dbReference>
<dbReference type="InterPro" id="IPR014721">
    <property type="entry name" value="Ribsml_uS5_D2-typ_fold_subgr"/>
</dbReference>
<dbReference type="InterPro" id="IPR000100">
    <property type="entry name" value="RNase_P"/>
</dbReference>
<dbReference type="InterPro" id="IPR020539">
    <property type="entry name" value="RNase_P_CS"/>
</dbReference>
<dbReference type="NCBIfam" id="TIGR00188">
    <property type="entry name" value="rnpA"/>
    <property type="match status" value="1"/>
</dbReference>
<dbReference type="PANTHER" id="PTHR33992">
    <property type="entry name" value="RIBONUCLEASE P PROTEIN COMPONENT"/>
    <property type="match status" value="1"/>
</dbReference>
<dbReference type="PANTHER" id="PTHR33992:SF1">
    <property type="entry name" value="RIBONUCLEASE P PROTEIN COMPONENT"/>
    <property type="match status" value="1"/>
</dbReference>
<dbReference type="Pfam" id="PF00825">
    <property type="entry name" value="Ribonuclease_P"/>
    <property type="match status" value="1"/>
</dbReference>
<dbReference type="SUPFAM" id="SSF54211">
    <property type="entry name" value="Ribosomal protein S5 domain 2-like"/>
    <property type="match status" value="1"/>
</dbReference>
<dbReference type="PROSITE" id="PS00648">
    <property type="entry name" value="RIBONUCLEASE_P"/>
    <property type="match status" value="1"/>
</dbReference>
<keyword id="KW-0255">Endonuclease</keyword>
<keyword id="KW-0378">Hydrolase</keyword>
<keyword id="KW-0540">Nuclease</keyword>
<keyword id="KW-0694">RNA-binding</keyword>
<keyword id="KW-0819">tRNA processing</keyword>
<comment type="function">
    <text evidence="1">RNaseP catalyzes the removal of the 5'-leader sequence from pre-tRNA to produce the mature 5'-terminus. It can also cleave other RNA substrates such as 4.5S RNA. The protein component plays an auxiliary but essential role in vivo by binding to the 5'-leader sequence and broadening the substrate specificity of the ribozyme.</text>
</comment>
<comment type="catalytic activity">
    <reaction evidence="1">
        <text>Endonucleolytic cleavage of RNA, removing 5'-extranucleotides from tRNA precursor.</text>
        <dbReference type="EC" id="3.1.26.5"/>
    </reaction>
</comment>
<comment type="subunit">
    <text evidence="1">Consists of a catalytic RNA component (M1 or rnpB) and a protein subunit.</text>
</comment>
<comment type="similarity">
    <text evidence="1">Belongs to the RnpA family.</text>
</comment>
<proteinExistence type="inferred from homology"/>